<organism>
    <name type="scientific">Cronobacter sakazakii (strain ATCC BAA-894)</name>
    <name type="common">Enterobacter sakazakii</name>
    <dbReference type="NCBI Taxonomy" id="290339"/>
    <lineage>
        <taxon>Bacteria</taxon>
        <taxon>Pseudomonadati</taxon>
        <taxon>Pseudomonadota</taxon>
        <taxon>Gammaproteobacteria</taxon>
        <taxon>Enterobacterales</taxon>
        <taxon>Enterobacteriaceae</taxon>
        <taxon>Cronobacter</taxon>
    </lineage>
</organism>
<proteinExistence type="inferred from homology"/>
<protein>
    <recommendedName>
        <fullName evidence="1">Hydroxyethylthiazole kinase</fullName>
        <ecNumber evidence="1">2.7.1.50</ecNumber>
    </recommendedName>
    <alternativeName>
        <fullName evidence="1">4-methyl-5-beta-hydroxyethylthiazole kinase</fullName>
        <shortName evidence="1">TH kinase</shortName>
        <shortName evidence="1">Thz kinase</shortName>
    </alternativeName>
</protein>
<gene>
    <name evidence="1" type="primary">thiM</name>
    <name type="ordered locus">ESA_01133</name>
</gene>
<accession>A7MHJ8</accession>
<reference key="1">
    <citation type="journal article" date="2010" name="PLoS ONE">
        <title>Genome sequence of Cronobacter sakazakii BAA-894 and comparative genomic hybridization analysis with other Cronobacter species.</title>
        <authorList>
            <person name="Kucerova E."/>
            <person name="Clifton S.W."/>
            <person name="Xia X.Q."/>
            <person name="Long F."/>
            <person name="Porwollik S."/>
            <person name="Fulton L."/>
            <person name="Fronick C."/>
            <person name="Minx P."/>
            <person name="Kyung K."/>
            <person name="Warren W."/>
            <person name="Fulton R."/>
            <person name="Feng D."/>
            <person name="Wollam A."/>
            <person name="Shah N."/>
            <person name="Bhonagiri V."/>
            <person name="Nash W.E."/>
            <person name="Hallsworth-Pepin K."/>
            <person name="Wilson R.K."/>
            <person name="McClelland M."/>
            <person name="Forsythe S.J."/>
        </authorList>
    </citation>
    <scope>NUCLEOTIDE SEQUENCE [LARGE SCALE GENOMIC DNA]</scope>
    <source>
        <strain>ATCC BAA-894</strain>
    </source>
</reference>
<feature type="chain" id="PRO_1000021512" description="Hydroxyethylthiazole kinase">
    <location>
        <begin position="1"/>
        <end position="265"/>
    </location>
</feature>
<feature type="binding site" evidence="1">
    <location>
        <position position="50"/>
    </location>
    <ligand>
        <name>substrate</name>
    </ligand>
</feature>
<feature type="binding site" evidence="1">
    <location>
        <position position="125"/>
    </location>
    <ligand>
        <name>ATP</name>
        <dbReference type="ChEBI" id="CHEBI:30616"/>
    </ligand>
</feature>
<feature type="binding site" evidence="1">
    <location>
        <position position="171"/>
    </location>
    <ligand>
        <name>ATP</name>
        <dbReference type="ChEBI" id="CHEBI:30616"/>
    </ligand>
</feature>
<feature type="binding site" evidence="1">
    <location>
        <position position="198"/>
    </location>
    <ligand>
        <name>substrate</name>
    </ligand>
</feature>
<evidence type="ECO:0000255" key="1">
    <source>
        <dbReference type="HAMAP-Rule" id="MF_00228"/>
    </source>
</evidence>
<sequence>MSSDLLCGSHAAPVVTQLRRHAPLVHCITNDVVQNFTANVLLALGASPAMVVDTDEAAQFAAIADALLINLGTLTRPQQQAMRAAIDSACAAGKPWTLDPVAVGALTLRTEFAQEILARRPAAIRANASEIRALTGESGGGRGVDATESAHQAREAARLLARRTGAVVAVTGEVDYITDGERTVAVEGGTAMLTRVVGTGCALSAVVAACCALPGDRLENVATACWLMKRAGEEALTVSRGPGSFASALLDNLHAQAFGGAYETH</sequence>
<dbReference type="EC" id="2.7.1.50" evidence="1"/>
<dbReference type="EMBL" id="CP000783">
    <property type="protein sequence ID" value="ABU76401.1"/>
    <property type="molecule type" value="Genomic_DNA"/>
</dbReference>
<dbReference type="RefSeq" id="WP_012124306.1">
    <property type="nucleotide sequence ID" value="NC_009778.1"/>
</dbReference>
<dbReference type="SMR" id="A7MHJ8"/>
<dbReference type="KEGG" id="esa:ESA_01133"/>
<dbReference type="PATRIC" id="fig|290339.8.peg.1004"/>
<dbReference type="HOGENOM" id="CLU_019943_0_1_6"/>
<dbReference type="UniPathway" id="UPA00060">
    <property type="reaction ID" value="UER00139"/>
</dbReference>
<dbReference type="Proteomes" id="UP000000260">
    <property type="component" value="Chromosome"/>
</dbReference>
<dbReference type="GO" id="GO:0005524">
    <property type="term" value="F:ATP binding"/>
    <property type="evidence" value="ECO:0007669"/>
    <property type="project" value="UniProtKB-UniRule"/>
</dbReference>
<dbReference type="GO" id="GO:0004417">
    <property type="term" value="F:hydroxyethylthiazole kinase activity"/>
    <property type="evidence" value="ECO:0007669"/>
    <property type="project" value="UniProtKB-UniRule"/>
</dbReference>
<dbReference type="GO" id="GO:0000287">
    <property type="term" value="F:magnesium ion binding"/>
    <property type="evidence" value="ECO:0007669"/>
    <property type="project" value="UniProtKB-UniRule"/>
</dbReference>
<dbReference type="GO" id="GO:0009228">
    <property type="term" value="P:thiamine biosynthetic process"/>
    <property type="evidence" value="ECO:0007669"/>
    <property type="project" value="UniProtKB-KW"/>
</dbReference>
<dbReference type="GO" id="GO:0009229">
    <property type="term" value="P:thiamine diphosphate biosynthetic process"/>
    <property type="evidence" value="ECO:0007669"/>
    <property type="project" value="UniProtKB-UniRule"/>
</dbReference>
<dbReference type="CDD" id="cd01170">
    <property type="entry name" value="THZ_kinase"/>
    <property type="match status" value="1"/>
</dbReference>
<dbReference type="FunFam" id="3.40.1190.20:FF:000015">
    <property type="entry name" value="Hydroxyethylthiazole kinase"/>
    <property type="match status" value="1"/>
</dbReference>
<dbReference type="Gene3D" id="3.40.1190.20">
    <property type="match status" value="1"/>
</dbReference>
<dbReference type="HAMAP" id="MF_00228">
    <property type="entry name" value="Thz_kinase"/>
    <property type="match status" value="1"/>
</dbReference>
<dbReference type="InterPro" id="IPR000417">
    <property type="entry name" value="Hyethyz_kinase"/>
</dbReference>
<dbReference type="InterPro" id="IPR029056">
    <property type="entry name" value="Ribokinase-like"/>
</dbReference>
<dbReference type="NCBIfam" id="NF006830">
    <property type="entry name" value="PRK09355.1"/>
    <property type="match status" value="1"/>
</dbReference>
<dbReference type="NCBIfam" id="TIGR00694">
    <property type="entry name" value="thiM"/>
    <property type="match status" value="1"/>
</dbReference>
<dbReference type="Pfam" id="PF02110">
    <property type="entry name" value="HK"/>
    <property type="match status" value="1"/>
</dbReference>
<dbReference type="PIRSF" id="PIRSF000513">
    <property type="entry name" value="Thz_kinase"/>
    <property type="match status" value="1"/>
</dbReference>
<dbReference type="PRINTS" id="PR01099">
    <property type="entry name" value="HYETHTZKNASE"/>
</dbReference>
<dbReference type="SUPFAM" id="SSF53613">
    <property type="entry name" value="Ribokinase-like"/>
    <property type="match status" value="1"/>
</dbReference>
<name>THIM_CROS8</name>
<keyword id="KW-0067">ATP-binding</keyword>
<keyword id="KW-0418">Kinase</keyword>
<keyword id="KW-0460">Magnesium</keyword>
<keyword id="KW-0479">Metal-binding</keyword>
<keyword id="KW-0547">Nucleotide-binding</keyword>
<keyword id="KW-1185">Reference proteome</keyword>
<keyword id="KW-0784">Thiamine biosynthesis</keyword>
<keyword id="KW-0808">Transferase</keyword>
<comment type="function">
    <text evidence="1">Catalyzes the phosphorylation of the hydroxyl group of 4-methyl-5-beta-hydroxyethylthiazole (THZ).</text>
</comment>
<comment type="catalytic activity">
    <reaction evidence="1">
        <text>5-(2-hydroxyethyl)-4-methylthiazole + ATP = 4-methyl-5-(2-phosphooxyethyl)-thiazole + ADP + H(+)</text>
        <dbReference type="Rhea" id="RHEA:24212"/>
        <dbReference type="ChEBI" id="CHEBI:15378"/>
        <dbReference type="ChEBI" id="CHEBI:17957"/>
        <dbReference type="ChEBI" id="CHEBI:30616"/>
        <dbReference type="ChEBI" id="CHEBI:58296"/>
        <dbReference type="ChEBI" id="CHEBI:456216"/>
        <dbReference type="EC" id="2.7.1.50"/>
    </reaction>
</comment>
<comment type="cofactor">
    <cofactor evidence="1">
        <name>Mg(2+)</name>
        <dbReference type="ChEBI" id="CHEBI:18420"/>
    </cofactor>
</comment>
<comment type="pathway">
    <text evidence="1">Cofactor biosynthesis; thiamine diphosphate biosynthesis; 4-methyl-5-(2-phosphoethyl)-thiazole from 5-(2-hydroxyethyl)-4-methylthiazole: step 1/1.</text>
</comment>
<comment type="similarity">
    <text evidence="1">Belongs to the Thz kinase family.</text>
</comment>